<reference key="1">
    <citation type="journal article" date="2002" name="Proc. Natl. Acad. Sci. U.S.A.">
        <title>Extensive mosaic structure revealed by the complete genome sequence of uropathogenic Escherichia coli.</title>
        <authorList>
            <person name="Welch R.A."/>
            <person name="Burland V."/>
            <person name="Plunkett G. III"/>
            <person name="Redford P."/>
            <person name="Roesch P."/>
            <person name="Rasko D."/>
            <person name="Buckles E.L."/>
            <person name="Liou S.-R."/>
            <person name="Boutin A."/>
            <person name="Hackett J."/>
            <person name="Stroud D."/>
            <person name="Mayhew G.F."/>
            <person name="Rose D.J."/>
            <person name="Zhou S."/>
            <person name="Schwartz D.C."/>
            <person name="Perna N.T."/>
            <person name="Mobley H.L.T."/>
            <person name="Donnenberg M.S."/>
            <person name="Blattner F.R."/>
        </authorList>
    </citation>
    <scope>NUCLEOTIDE SEQUENCE [LARGE SCALE GENOMIC DNA]</scope>
    <source>
        <strain>CFT073 / ATCC 700928 / UPEC</strain>
    </source>
</reference>
<feature type="chain" id="PRO_0000402618" description="Pyrimidine monooxygenase RutA">
    <location>
        <begin position="1"/>
        <end position="393"/>
    </location>
</feature>
<feature type="binding site" evidence="1">
    <location>
        <begin position="79"/>
        <end position="80"/>
    </location>
    <ligand>
        <name>FMN</name>
        <dbReference type="ChEBI" id="CHEBI:58210"/>
    </ligand>
</feature>
<feature type="binding site" evidence="1">
    <location>
        <position position="145"/>
    </location>
    <ligand>
        <name>FMN</name>
        <dbReference type="ChEBI" id="CHEBI:58210"/>
    </ligand>
</feature>
<feature type="binding site" evidence="1">
    <location>
        <position position="154"/>
    </location>
    <ligand>
        <name>FMN</name>
        <dbReference type="ChEBI" id="CHEBI:58210"/>
    </ligand>
</feature>
<feature type="binding site" evidence="1">
    <location>
        <begin position="170"/>
        <end position="171"/>
    </location>
    <ligand>
        <name>FMN</name>
        <dbReference type="ChEBI" id="CHEBI:58210"/>
    </ligand>
</feature>
<feature type="binding site" evidence="1">
    <location>
        <position position="220"/>
    </location>
    <ligand>
        <name>FMN</name>
        <dbReference type="ChEBI" id="CHEBI:58210"/>
    </ligand>
</feature>
<dbReference type="EC" id="1.14.99.46" evidence="1"/>
<dbReference type="EMBL" id="AE014075">
    <property type="protein sequence ID" value="AAN79617.1"/>
    <property type="molecule type" value="Genomic_DNA"/>
</dbReference>
<dbReference type="SMR" id="Q8FJ41"/>
<dbReference type="STRING" id="199310.c1149"/>
<dbReference type="KEGG" id="ecc:c1149"/>
<dbReference type="eggNOG" id="COG2141">
    <property type="taxonomic scope" value="Bacteria"/>
</dbReference>
<dbReference type="HOGENOM" id="CLU_027853_1_1_6"/>
<dbReference type="BioCyc" id="ECOL199310:C1149-MONOMER"/>
<dbReference type="Proteomes" id="UP000001410">
    <property type="component" value="Chromosome"/>
</dbReference>
<dbReference type="GO" id="GO:0008726">
    <property type="term" value="F:alkanesulfonate monooxygenase activity"/>
    <property type="evidence" value="ECO:0007669"/>
    <property type="project" value="TreeGrafter"/>
</dbReference>
<dbReference type="GO" id="GO:0052614">
    <property type="term" value="F:uracil oxygenase activity"/>
    <property type="evidence" value="ECO:0007669"/>
    <property type="project" value="UniProtKB-EC"/>
</dbReference>
<dbReference type="GO" id="GO:0046306">
    <property type="term" value="P:alkanesulfonate catabolic process"/>
    <property type="evidence" value="ECO:0007669"/>
    <property type="project" value="TreeGrafter"/>
</dbReference>
<dbReference type="GO" id="GO:0019740">
    <property type="term" value="P:nitrogen utilization"/>
    <property type="evidence" value="ECO:0007669"/>
    <property type="project" value="UniProtKB-UniRule"/>
</dbReference>
<dbReference type="GO" id="GO:0006212">
    <property type="term" value="P:uracil catabolic process"/>
    <property type="evidence" value="ECO:0007669"/>
    <property type="project" value="UniProtKB-UniRule"/>
</dbReference>
<dbReference type="CDD" id="cd01094">
    <property type="entry name" value="Alkanesulfonate_monoxygenase"/>
    <property type="match status" value="1"/>
</dbReference>
<dbReference type="FunFam" id="3.20.20.30:FF:000003">
    <property type="entry name" value="Pyrimidine monooxygenase RutA"/>
    <property type="match status" value="1"/>
</dbReference>
<dbReference type="Gene3D" id="3.20.20.30">
    <property type="entry name" value="Luciferase-like domain"/>
    <property type="match status" value="1"/>
</dbReference>
<dbReference type="HAMAP" id="MF_01699">
    <property type="entry name" value="RutA"/>
    <property type="match status" value="1"/>
</dbReference>
<dbReference type="InterPro" id="IPR011251">
    <property type="entry name" value="Luciferase-like_dom"/>
</dbReference>
<dbReference type="InterPro" id="IPR036661">
    <property type="entry name" value="Luciferase-like_sf"/>
</dbReference>
<dbReference type="InterPro" id="IPR019914">
    <property type="entry name" value="Pyrimidine_monooxygenase_RutA"/>
</dbReference>
<dbReference type="InterPro" id="IPR050172">
    <property type="entry name" value="SsuD_RutA_monooxygenase"/>
</dbReference>
<dbReference type="NCBIfam" id="TIGR03612">
    <property type="entry name" value="RutA"/>
    <property type="match status" value="1"/>
</dbReference>
<dbReference type="PANTHER" id="PTHR42847">
    <property type="entry name" value="ALKANESULFONATE MONOOXYGENASE"/>
    <property type="match status" value="1"/>
</dbReference>
<dbReference type="PANTHER" id="PTHR42847:SF4">
    <property type="entry name" value="ALKANESULFONATE MONOOXYGENASE-RELATED"/>
    <property type="match status" value="1"/>
</dbReference>
<dbReference type="Pfam" id="PF00296">
    <property type="entry name" value="Bac_luciferase"/>
    <property type="match status" value="1"/>
</dbReference>
<dbReference type="SUPFAM" id="SSF51679">
    <property type="entry name" value="Bacterial luciferase-like"/>
    <property type="match status" value="1"/>
</dbReference>
<protein>
    <recommendedName>
        <fullName evidence="1">Pyrimidine monooxygenase RutA</fullName>
        <ecNumber evidence="1">1.14.99.46</ecNumber>
    </recommendedName>
</protein>
<keyword id="KW-0285">Flavoprotein</keyword>
<keyword id="KW-0288">FMN</keyword>
<keyword id="KW-0503">Monooxygenase</keyword>
<keyword id="KW-0521">NADP</keyword>
<keyword id="KW-0560">Oxidoreductase</keyword>
<keyword id="KW-1185">Reference proteome</keyword>
<proteinExistence type="inferred from homology"/>
<organism>
    <name type="scientific">Escherichia coli O6:H1 (strain CFT073 / ATCC 700928 / UPEC)</name>
    <dbReference type="NCBI Taxonomy" id="199310"/>
    <lineage>
        <taxon>Bacteria</taxon>
        <taxon>Pseudomonadati</taxon>
        <taxon>Pseudomonadota</taxon>
        <taxon>Gammaproteobacteria</taxon>
        <taxon>Enterobacterales</taxon>
        <taxon>Enterobacteriaceae</taxon>
        <taxon>Escherichia</taxon>
    </lineage>
</organism>
<gene>
    <name evidence="1" type="primary">rutA</name>
    <name type="ordered locus">c1149</name>
</gene>
<evidence type="ECO:0000255" key="1">
    <source>
        <dbReference type="HAMAP-Rule" id="MF_01699"/>
    </source>
</evidence>
<name>RUTA_ECOL6</name>
<comment type="function">
    <text evidence="1">Catalyzes the pyrimidine ring opening between N-3 and C-4 by an unusual flavin hydroperoxide-catalyzed mechanism, adding oxygen atoms in the process to yield ureidoacrylate peracid, that immediately reacts with FMN forming ureidoacrylate and FMN-N(5)-oxide. The FMN-N(5)-oxide reacts spontaneously with NADH to produce FMN. Requires the flavin reductase RutF to regenerate FMN in vivo.</text>
</comment>
<comment type="catalytic activity">
    <reaction evidence="1">
        <text>uracil + FMNH2 + NADH + O2 = (Z)-3-ureidoacrylate + FMN + NAD(+) + H2O + H(+)</text>
        <dbReference type="Rhea" id="RHEA:31587"/>
        <dbReference type="ChEBI" id="CHEBI:15377"/>
        <dbReference type="ChEBI" id="CHEBI:15378"/>
        <dbReference type="ChEBI" id="CHEBI:15379"/>
        <dbReference type="ChEBI" id="CHEBI:17568"/>
        <dbReference type="ChEBI" id="CHEBI:57540"/>
        <dbReference type="ChEBI" id="CHEBI:57618"/>
        <dbReference type="ChEBI" id="CHEBI:57945"/>
        <dbReference type="ChEBI" id="CHEBI:58210"/>
        <dbReference type="ChEBI" id="CHEBI:59891"/>
        <dbReference type="EC" id="1.14.99.46"/>
    </reaction>
</comment>
<comment type="catalytic activity">
    <reaction evidence="1">
        <text>thymine + FMNH2 + NADH + O2 = (Z)-2-methylureidoacrylate + FMN + NAD(+) + H2O + H(+)</text>
        <dbReference type="Rhea" id="RHEA:31599"/>
        <dbReference type="ChEBI" id="CHEBI:15377"/>
        <dbReference type="ChEBI" id="CHEBI:15378"/>
        <dbReference type="ChEBI" id="CHEBI:15379"/>
        <dbReference type="ChEBI" id="CHEBI:17821"/>
        <dbReference type="ChEBI" id="CHEBI:57540"/>
        <dbReference type="ChEBI" id="CHEBI:57618"/>
        <dbReference type="ChEBI" id="CHEBI:57945"/>
        <dbReference type="ChEBI" id="CHEBI:58210"/>
        <dbReference type="ChEBI" id="CHEBI:143783"/>
        <dbReference type="EC" id="1.14.99.46"/>
    </reaction>
</comment>
<comment type="induction">
    <text evidence="1">Up-regulated by the nitrogen regulatory protein C (NtrC also called GlnG) and repressed by RutR.</text>
</comment>
<comment type="similarity">
    <text evidence="1">Belongs to the NtaA/SnaA/DszA monooxygenase family. RutA subfamily.</text>
</comment>
<sequence length="393" mass="43480">MQTSHYAAEKDMQDAAPRLTFTLRDEERLMMKIGVFVPIGNNGWLISTHAPQYMPTFELNKAIVQKAEHYHFDFALSMIKLRGFGGKTEFWDHNLESFTLMAGLAAVTSRIQIYATAATLTLPPAIVARMAATIDSISGGRFGVNLVTGWQKPEYEQMGIWPGDDYFSRRYDYLTEYVQVLRDLWGSGKSDFKGDFFTMDDCRVSPQPSVPMKVICAGQSDAGMAFSARYADFNFCFGKGVNTPTAFAPTAARMKQAAEQTGRDVGSYVLFMVIADETDDAARAKWEHYKAGADEEALSWLTEQSQKDTRSGTDTNVRQMADPTSAVNINMGTLVGSYASVARMLDEVANVPGAEGVLLTFDDFLSGIETFGERIQPLMLCRAHLPALTQEVA</sequence>
<accession>Q8FJ41</accession>